<name>IOLG_BURA4</name>
<feature type="chain" id="PRO_0000352559" description="Inositol 2-dehydrogenase">
    <location>
        <begin position="1"/>
        <end position="337"/>
    </location>
</feature>
<keyword id="KW-0520">NAD</keyword>
<keyword id="KW-0560">Oxidoreductase</keyword>
<organism>
    <name type="scientific">Burkholderia ambifaria (strain MC40-6)</name>
    <dbReference type="NCBI Taxonomy" id="398577"/>
    <lineage>
        <taxon>Bacteria</taxon>
        <taxon>Pseudomonadati</taxon>
        <taxon>Pseudomonadota</taxon>
        <taxon>Betaproteobacteria</taxon>
        <taxon>Burkholderiales</taxon>
        <taxon>Burkholderiaceae</taxon>
        <taxon>Burkholderia</taxon>
        <taxon>Burkholderia cepacia complex</taxon>
    </lineage>
</organism>
<dbReference type="EC" id="1.1.1.18" evidence="1"/>
<dbReference type="EMBL" id="CP001025">
    <property type="protein sequence ID" value="ACB63835.1"/>
    <property type="molecule type" value="Genomic_DNA"/>
</dbReference>
<dbReference type="RefSeq" id="WP_012363689.1">
    <property type="nucleotide sequence ID" value="NC_010551.1"/>
</dbReference>
<dbReference type="SMR" id="B1YNW1"/>
<dbReference type="KEGG" id="bac:BamMC406_1347"/>
<dbReference type="HOGENOM" id="CLU_023194_0_1_4"/>
<dbReference type="OrthoDB" id="8565814at2"/>
<dbReference type="Proteomes" id="UP000001680">
    <property type="component" value="Chromosome 1"/>
</dbReference>
<dbReference type="GO" id="GO:0050112">
    <property type="term" value="F:inositol 2-dehydrogenase (NAD+) activity"/>
    <property type="evidence" value="ECO:0007669"/>
    <property type="project" value="UniProtKB-UniRule"/>
</dbReference>
<dbReference type="GO" id="GO:0000166">
    <property type="term" value="F:nucleotide binding"/>
    <property type="evidence" value="ECO:0007669"/>
    <property type="project" value="InterPro"/>
</dbReference>
<dbReference type="GO" id="GO:0019310">
    <property type="term" value="P:inositol catabolic process"/>
    <property type="evidence" value="ECO:0007669"/>
    <property type="project" value="UniProtKB-UniRule"/>
</dbReference>
<dbReference type="Gene3D" id="3.30.360.10">
    <property type="entry name" value="Dihydrodipicolinate Reductase, domain 2"/>
    <property type="match status" value="1"/>
</dbReference>
<dbReference type="Gene3D" id="3.40.50.720">
    <property type="entry name" value="NAD(P)-binding Rossmann-like Domain"/>
    <property type="match status" value="1"/>
</dbReference>
<dbReference type="HAMAP" id="MF_01671">
    <property type="entry name" value="IolG"/>
    <property type="match status" value="1"/>
</dbReference>
<dbReference type="InterPro" id="IPR050424">
    <property type="entry name" value="Gfo-Idh-MocA_inositol_DH"/>
</dbReference>
<dbReference type="InterPro" id="IPR004104">
    <property type="entry name" value="Gfo/Idh/MocA-like_OxRdtase_C"/>
</dbReference>
<dbReference type="InterPro" id="IPR000683">
    <property type="entry name" value="Gfo/Idh/MocA-like_OxRdtase_N"/>
</dbReference>
<dbReference type="InterPro" id="IPR023794">
    <property type="entry name" value="MI/DCI_dehydrogenase"/>
</dbReference>
<dbReference type="InterPro" id="IPR036291">
    <property type="entry name" value="NAD(P)-bd_dom_sf"/>
</dbReference>
<dbReference type="PANTHER" id="PTHR43593">
    <property type="match status" value="1"/>
</dbReference>
<dbReference type="PANTHER" id="PTHR43593:SF1">
    <property type="entry name" value="INOSITOL 2-DEHYDROGENASE"/>
    <property type="match status" value="1"/>
</dbReference>
<dbReference type="Pfam" id="PF01408">
    <property type="entry name" value="GFO_IDH_MocA"/>
    <property type="match status" value="1"/>
</dbReference>
<dbReference type="Pfam" id="PF02894">
    <property type="entry name" value="GFO_IDH_MocA_C"/>
    <property type="match status" value="1"/>
</dbReference>
<dbReference type="SUPFAM" id="SSF55347">
    <property type="entry name" value="Glyceraldehyde-3-phosphate dehydrogenase-like, C-terminal domain"/>
    <property type="match status" value="1"/>
</dbReference>
<dbReference type="SUPFAM" id="SSF51735">
    <property type="entry name" value="NAD(P)-binding Rossmann-fold domains"/>
    <property type="match status" value="1"/>
</dbReference>
<accession>B1YNW1</accession>
<comment type="function">
    <text evidence="1">Involved in the oxidation of myo-inositol (MI) to 2-keto-myo-inositol (2KMI or 2-inosose).</text>
</comment>
<comment type="catalytic activity">
    <reaction evidence="1">
        <text>myo-inositol + NAD(+) = scyllo-inosose + NADH + H(+)</text>
        <dbReference type="Rhea" id="RHEA:16949"/>
        <dbReference type="ChEBI" id="CHEBI:15378"/>
        <dbReference type="ChEBI" id="CHEBI:17268"/>
        <dbReference type="ChEBI" id="CHEBI:17811"/>
        <dbReference type="ChEBI" id="CHEBI:57540"/>
        <dbReference type="ChEBI" id="CHEBI:57945"/>
        <dbReference type="EC" id="1.1.1.18"/>
    </reaction>
</comment>
<comment type="subunit">
    <text evidence="1">Homotetramer.</text>
</comment>
<comment type="similarity">
    <text evidence="1">Belongs to the Gfo/Idh/MocA family.</text>
</comment>
<reference key="1">
    <citation type="submission" date="2008-04" db="EMBL/GenBank/DDBJ databases">
        <title>Complete sequence of chromosome 1 of Burkholderia ambifaria MC40-6.</title>
        <authorList>
            <person name="Copeland A."/>
            <person name="Lucas S."/>
            <person name="Lapidus A."/>
            <person name="Glavina del Rio T."/>
            <person name="Dalin E."/>
            <person name="Tice H."/>
            <person name="Pitluck S."/>
            <person name="Chain P."/>
            <person name="Malfatti S."/>
            <person name="Shin M."/>
            <person name="Vergez L."/>
            <person name="Lang D."/>
            <person name="Schmutz J."/>
            <person name="Larimer F."/>
            <person name="Land M."/>
            <person name="Hauser L."/>
            <person name="Kyrpides N."/>
            <person name="Lykidis A."/>
            <person name="Ramette A."/>
            <person name="Konstantinidis K."/>
            <person name="Tiedje J."/>
            <person name="Richardson P."/>
        </authorList>
    </citation>
    <scope>NUCLEOTIDE SEQUENCE [LARGE SCALE GENOMIC DNA]</scope>
    <source>
        <strain>MC40-6</strain>
    </source>
</reference>
<proteinExistence type="inferred from homology"/>
<protein>
    <recommendedName>
        <fullName evidence="1">Inositol 2-dehydrogenase</fullName>
        <ecNumber evidence="1">1.1.1.18</ecNumber>
    </recommendedName>
    <alternativeName>
        <fullName evidence="1">Myo-inositol 2-dehydrogenase</fullName>
        <shortName evidence="1">MI 2-dehydrogenase</shortName>
    </alternativeName>
</protein>
<sequence length="337" mass="36527">MTLQIGVIGCGAIGQDHIRRLTRKLSGARVVAVNDIDPQQARDAVTKYGLDAEIYGDGHEVVAAADVQAVLVTSWGPTHEAFVLDAIAHGKPVFCEKPLAVTAQGCMRIVEAEVAHGRRLVQVGFMRPYDEGYRALKHVIDSGGIGAPLMLHCAHRNQSVGERYTTDMAITDTLIHELDVLRWLLGEDYTSAQVVYPKKTRHASAHLADPQIVLLETASGVRIDVEIFVNCQYGYDIQCEVVGENGIAKLPDPPAVGLKHAARQSVEIMTDWKERFIASYDVELQAFIDGVRQGALTGPSAWDGYAAAVAADACVRAQQSGAVEPIAMAERPAFYRG</sequence>
<gene>
    <name evidence="1" type="primary">iolG</name>
    <name type="ordered locus">BamMC406_1347</name>
</gene>
<evidence type="ECO:0000255" key="1">
    <source>
        <dbReference type="HAMAP-Rule" id="MF_01671"/>
    </source>
</evidence>